<evidence type="ECO:0000255" key="1">
    <source>
        <dbReference type="HAMAP-Rule" id="MF_00570"/>
    </source>
</evidence>
<evidence type="ECO:0000305" key="2"/>
<comment type="function">
    <text evidence="1">Catalyzes the synthesis of beta-nicotinate D-ribonucleotide from nicotinate and 5-phospho-D-ribose 1-phosphate at the expense of ATP.</text>
</comment>
<comment type="catalytic activity">
    <reaction evidence="1">
        <text>nicotinate + 5-phospho-alpha-D-ribose 1-diphosphate + ATP + H2O = nicotinate beta-D-ribonucleotide + ADP + phosphate + diphosphate</text>
        <dbReference type="Rhea" id="RHEA:36163"/>
        <dbReference type="ChEBI" id="CHEBI:15377"/>
        <dbReference type="ChEBI" id="CHEBI:30616"/>
        <dbReference type="ChEBI" id="CHEBI:32544"/>
        <dbReference type="ChEBI" id="CHEBI:33019"/>
        <dbReference type="ChEBI" id="CHEBI:43474"/>
        <dbReference type="ChEBI" id="CHEBI:57502"/>
        <dbReference type="ChEBI" id="CHEBI:58017"/>
        <dbReference type="ChEBI" id="CHEBI:456216"/>
        <dbReference type="EC" id="6.3.4.21"/>
    </reaction>
</comment>
<comment type="pathway">
    <text evidence="1">Cofactor biosynthesis; NAD(+) biosynthesis; nicotinate D-ribonucleotide from nicotinate: step 1/1.</text>
</comment>
<comment type="PTM">
    <text evidence="1">Transiently phosphorylated on a His residue during the reaction cycle. Phosphorylation strongly increases the affinity for substrates and increases the rate of nicotinate D-ribonucleotide production. Dephosphorylation regenerates the low-affinity form of the enzyme, leading to product release.</text>
</comment>
<comment type="similarity">
    <text evidence="1">Belongs to the NAPRTase family.</text>
</comment>
<comment type="sequence caution" evidence="2">
    <conflict type="erroneous initiation">
        <sequence resource="EMBL-CDS" id="AAN79541"/>
    </conflict>
    <text>Extended N-terminus.</text>
</comment>
<name>PNCB_ECOL6</name>
<keyword id="KW-0436">Ligase</keyword>
<keyword id="KW-0597">Phosphoprotein</keyword>
<keyword id="KW-0662">Pyridine nucleotide biosynthesis</keyword>
<keyword id="KW-1185">Reference proteome</keyword>
<gene>
    <name evidence="1" type="primary">pncB</name>
    <name type="ordered locus">c1073</name>
</gene>
<reference key="1">
    <citation type="journal article" date="2002" name="Proc. Natl. Acad. Sci. U.S.A.">
        <title>Extensive mosaic structure revealed by the complete genome sequence of uropathogenic Escherichia coli.</title>
        <authorList>
            <person name="Welch R.A."/>
            <person name="Burland V."/>
            <person name="Plunkett G. III"/>
            <person name="Redford P."/>
            <person name="Roesch P."/>
            <person name="Rasko D."/>
            <person name="Buckles E.L."/>
            <person name="Liou S.-R."/>
            <person name="Boutin A."/>
            <person name="Hackett J."/>
            <person name="Stroud D."/>
            <person name="Mayhew G.F."/>
            <person name="Rose D.J."/>
            <person name="Zhou S."/>
            <person name="Schwartz D.C."/>
            <person name="Perna N.T."/>
            <person name="Mobley H.L.T."/>
            <person name="Donnenberg M.S."/>
            <person name="Blattner F.R."/>
        </authorList>
    </citation>
    <scope>NUCLEOTIDE SEQUENCE [LARGE SCALE GENOMIC DNA]</scope>
    <source>
        <strain>CFT073 / ATCC 700928 / UPEC</strain>
    </source>
</reference>
<protein>
    <recommendedName>
        <fullName evidence="1">Nicotinate phosphoribosyltransferase</fullName>
        <shortName evidence="1">NAPRTase</shortName>
        <ecNumber evidence="1">6.3.4.21</ecNumber>
    </recommendedName>
</protein>
<proteinExistence type="inferred from homology"/>
<feature type="chain" id="PRO_0000205830" description="Nicotinate phosphoribosyltransferase">
    <location>
        <begin position="1"/>
        <end position="400"/>
    </location>
</feature>
<feature type="modified residue" description="Phosphohistidine; by autocatalysis" evidence="1">
    <location>
        <position position="220"/>
    </location>
</feature>
<accession>Q8FJ98</accession>
<organism>
    <name type="scientific">Escherichia coli O6:H1 (strain CFT073 / ATCC 700928 / UPEC)</name>
    <dbReference type="NCBI Taxonomy" id="199310"/>
    <lineage>
        <taxon>Bacteria</taxon>
        <taxon>Pseudomonadati</taxon>
        <taxon>Pseudomonadota</taxon>
        <taxon>Gammaproteobacteria</taxon>
        <taxon>Enterobacterales</taxon>
        <taxon>Enterobacteriaceae</taxon>
        <taxon>Escherichia</taxon>
    </lineage>
</organism>
<dbReference type="EC" id="6.3.4.21" evidence="1"/>
<dbReference type="EMBL" id="AE014075">
    <property type="protein sequence ID" value="AAN79541.1"/>
    <property type="status" value="ALT_INIT"/>
    <property type="molecule type" value="Genomic_DNA"/>
</dbReference>
<dbReference type="RefSeq" id="WP_001304764.1">
    <property type="nucleotide sequence ID" value="NZ_CP051263.1"/>
</dbReference>
<dbReference type="SMR" id="Q8FJ98"/>
<dbReference type="STRING" id="199310.c1073"/>
<dbReference type="KEGG" id="ecc:c1073"/>
<dbReference type="eggNOG" id="COG1488">
    <property type="taxonomic scope" value="Bacteria"/>
</dbReference>
<dbReference type="HOGENOM" id="CLU_030991_1_0_6"/>
<dbReference type="UniPathway" id="UPA00253">
    <property type="reaction ID" value="UER00457"/>
</dbReference>
<dbReference type="Proteomes" id="UP000001410">
    <property type="component" value="Chromosome"/>
</dbReference>
<dbReference type="GO" id="GO:0005829">
    <property type="term" value="C:cytosol"/>
    <property type="evidence" value="ECO:0007669"/>
    <property type="project" value="TreeGrafter"/>
</dbReference>
<dbReference type="GO" id="GO:0004516">
    <property type="term" value="F:nicotinate phosphoribosyltransferase activity"/>
    <property type="evidence" value="ECO:0007669"/>
    <property type="project" value="UniProtKB-UniRule"/>
</dbReference>
<dbReference type="GO" id="GO:0034355">
    <property type="term" value="P:NAD biosynthetic process via the salvage pathway"/>
    <property type="evidence" value="ECO:0007669"/>
    <property type="project" value="TreeGrafter"/>
</dbReference>
<dbReference type="CDD" id="cd01401">
    <property type="entry name" value="PncB_like"/>
    <property type="match status" value="1"/>
</dbReference>
<dbReference type="FunFam" id="3.20.140.10:FF:000001">
    <property type="entry name" value="Nicotinate phosphoribosyltransferase"/>
    <property type="match status" value="1"/>
</dbReference>
<dbReference type="Gene3D" id="3.20.140.10">
    <property type="entry name" value="nicotinate phosphoribosyltransferase"/>
    <property type="match status" value="1"/>
</dbReference>
<dbReference type="HAMAP" id="MF_00570">
    <property type="entry name" value="NAPRTase"/>
    <property type="match status" value="1"/>
</dbReference>
<dbReference type="InterPro" id="IPR041525">
    <property type="entry name" value="N/Namide_PRibTrfase"/>
</dbReference>
<dbReference type="InterPro" id="IPR040727">
    <property type="entry name" value="NAPRTase_N"/>
</dbReference>
<dbReference type="InterPro" id="IPR006406">
    <property type="entry name" value="Nic_PRibTrfase"/>
</dbReference>
<dbReference type="InterPro" id="IPR007229">
    <property type="entry name" value="Nic_PRibTrfase-Fam"/>
</dbReference>
<dbReference type="InterPro" id="IPR036068">
    <property type="entry name" value="Nicotinate_pribotase-like_C"/>
</dbReference>
<dbReference type="NCBIfam" id="TIGR01514">
    <property type="entry name" value="NAPRTase"/>
    <property type="match status" value="1"/>
</dbReference>
<dbReference type="NCBIfam" id="NF003704">
    <property type="entry name" value="PRK05321.1"/>
    <property type="match status" value="1"/>
</dbReference>
<dbReference type="PANTHER" id="PTHR11098">
    <property type="entry name" value="NICOTINATE PHOSPHORIBOSYLTRANSFERASE"/>
    <property type="match status" value="1"/>
</dbReference>
<dbReference type="PANTHER" id="PTHR11098:SF1">
    <property type="entry name" value="NICOTINATE PHOSPHORIBOSYLTRANSFERASE"/>
    <property type="match status" value="1"/>
</dbReference>
<dbReference type="Pfam" id="PF04095">
    <property type="entry name" value="NAPRTase"/>
    <property type="match status" value="1"/>
</dbReference>
<dbReference type="Pfam" id="PF17767">
    <property type="entry name" value="NAPRTase_N"/>
    <property type="match status" value="1"/>
</dbReference>
<dbReference type="PIRSF" id="PIRSF000484">
    <property type="entry name" value="NAPRT"/>
    <property type="match status" value="1"/>
</dbReference>
<dbReference type="SUPFAM" id="SSF51690">
    <property type="entry name" value="Nicotinate/Quinolinate PRTase C-terminal domain-like"/>
    <property type="match status" value="1"/>
</dbReference>
<dbReference type="SUPFAM" id="SSF54675">
    <property type="entry name" value="Nicotinate/Quinolinate PRTase N-terminal domain-like"/>
    <property type="match status" value="1"/>
</dbReference>
<sequence>MTQFASPVLHSLLDTDAYKLHMQQAVFHHYYDVHVAAEFRCRGDDLLGIYADAIREQVQAMQHLRLQDDEYQWLSALPFFKADYLNWLREFRFNPEQVTVSNDNGKLDIRLSGPWREVILWEVPLLAVISEMVHRYRSPQADVAQALDTLENKLVDFSALTAGLDMSRFHLMDFGTRRRFSREVQETIVKRLHQESWFVGTSNYDLARRLSLTPMGTQAHEWFQAHQQISPDLANSQRAALAAWLEEYPDQLGIALTDCITMDAFLRDFGVEFASRYQGLRHDSGDPVEWGEKAIAHYEKLGIDPQSKTLVFSDNLDLRKAVELYRHFSSRVQLSFGIGTRLTCDIPQVKPLNIVIKLVECNGKPVAKLSDSPGKTICHDKAFVRALRKAFDLPHIKKAS</sequence>